<accession>P23099</accession>
<keyword id="KW-0001">2Fe-2S</keyword>
<keyword id="KW-0058">Aromatic hydrocarbons catabolism</keyword>
<keyword id="KW-0223">Dioxygenase</keyword>
<keyword id="KW-0408">Iron</keyword>
<keyword id="KW-0411">Iron-sulfur</keyword>
<keyword id="KW-0479">Metal-binding</keyword>
<keyword id="KW-0520">NAD</keyword>
<keyword id="KW-0560">Oxidoreductase</keyword>
<keyword id="KW-0614">Plasmid</keyword>
<organism>
    <name type="scientific">Pseudomonas putida</name>
    <name type="common">Arthrobacter siderocapsulatus</name>
    <dbReference type="NCBI Taxonomy" id="303"/>
    <lineage>
        <taxon>Bacteria</taxon>
        <taxon>Pseudomonadati</taxon>
        <taxon>Pseudomonadota</taxon>
        <taxon>Gammaproteobacteria</taxon>
        <taxon>Pseudomonadales</taxon>
        <taxon>Pseudomonadaceae</taxon>
        <taxon>Pseudomonas</taxon>
    </lineage>
</organism>
<dbReference type="EC" id="1.14.12.-"/>
<dbReference type="EMBL" id="M64747">
    <property type="protein sequence ID" value="AAA26047.1"/>
    <property type="molecule type" value="Genomic_DNA"/>
</dbReference>
<dbReference type="PIR" id="S23482">
    <property type="entry name" value="A41659"/>
</dbReference>
<dbReference type="RefSeq" id="NP_542871.1">
    <property type="nucleotide sequence ID" value="NC_003350.1"/>
</dbReference>
<dbReference type="SMR" id="P23099"/>
<dbReference type="KEGG" id="ag:AAA26047"/>
<dbReference type="BioCyc" id="MetaCyc:MONOMER-2961"/>
<dbReference type="UniPathway" id="UPA00273"/>
<dbReference type="GO" id="GO:0051537">
    <property type="term" value="F:2 iron, 2 sulfur cluster binding"/>
    <property type="evidence" value="ECO:0007669"/>
    <property type="project" value="UniProtKB-KW"/>
</dbReference>
<dbReference type="GO" id="GO:0051213">
    <property type="term" value="F:dioxygenase activity"/>
    <property type="evidence" value="ECO:0007669"/>
    <property type="project" value="UniProtKB-KW"/>
</dbReference>
<dbReference type="GO" id="GO:0005506">
    <property type="term" value="F:iron ion binding"/>
    <property type="evidence" value="ECO:0007669"/>
    <property type="project" value="InterPro"/>
</dbReference>
<dbReference type="GO" id="GO:0042203">
    <property type="term" value="P:toluene catabolic process"/>
    <property type="evidence" value="ECO:0007669"/>
    <property type="project" value="UniProtKB-UniPathway"/>
</dbReference>
<dbReference type="CDD" id="cd08879">
    <property type="entry name" value="RHO_alpha_C_AntDO-like"/>
    <property type="match status" value="1"/>
</dbReference>
<dbReference type="CDD" id="cd03542">
    <property type="entry name" value="Rieske_RO_Alpha_HBDO"/>
    <property type="match status" value="1"/>
</dbReference>
<dbReference type="Gene3D" id="3.90.380.10">
    <property type="entry name" value="Naphthalene 1,2-dioxygenase Alpha Subunit, Chain A, domain 1"/>
    <property type="match status" value="1"/>
</dbReference>
<dbReference type="Gene3D" id="2.102.10.10">
    <property type="entry name" value="Rieske [2Fe-2S] iron-sulphur domain"/>
    <property type="match status" value="1"/>
</dbReference>
<dbReference type="InterPro" id="IPR017639">
    <property type="entry name" value="Benzo_1-2-diOase_lsu"/>
</dbReference>
<dbReference type="InterPro" id="IPR017941">
    <property type="entry name" value="Rieske_2Fe-2S"/>
</dbReference>
<dbReference type="InterPro" id="IPR036922">
    <property type="entry name" value="Rieske_2Fe-2S_sf"/>
</dbReference>
<dbReference type="InterPro" id="IPR015881">
    <property type="entry name" value="Ring-hydroxy_dOase_2Fe2S_BS"/>
</dbReference>
<dbReference type="InterPro" id="IPR015879">
    <property type="entry name" value="Ring_hydroxy_dOase_asu_C_dom"/>
</dbReference>
<dbReference type="InterPro" id="IPR001663">
    <property type="entry name" value="Rng_hydr_dOase-A"/>
</dbReference>
<dbReference type="NCBIfam" id="TIGR03229">
    <property type="entry name" value="benzo_1_2_benA"/>
    <property type="match status" value="1"/>
</dbReference>
<dbReference type="PANTHER" id="PTHR43756:SF1">
    <property type="entry name" value="3-PHENYLPROPIONATE_CINNAMIC ACID DIOXYGENASE SUBUNIT ALPHA"/>
    <property type="match status" value="1"/>
</dbReference>
<dbReference type="PANTHER" id="PTHR43756">
    <property type="entry name" value="CHOLINE MONOOXYGENASE, CHLOROPLASTIC"/>
    <property type="match status" value="1"/>
</dbReference>
<dbReference type="Pfam" id="PF00355">
    <property type="entry name" value="Rieske"/>
    <property type="match status" value="1"/>
</dbReference>
<dbReference type="Pfam" id="PF00848">
    <property type="entry name" value="Ring_hydroxyl_A"/>
    <property type="match status" value="1"/>
</dbReference>
<dbReference type="PRINTS" id="PR00090">
    <property type="entry name" value="RNGDIOXGNASE"/>
</dbReference>
<dbReference type="SUPFAM" id="SSF55961">
    <property type="entry name" value="Bet v1-like"/>
    <property type="match status" value="1"/>
</dbReference>
<dbReference type="SUPFAM" id="SSF50022">
    <property type="entry name" value="ISP domain"/>
    <property type="match status" value="1"/>
</dbReference>
<dbReference type="PROSITE" id="PS51296">
    <property type="entry name" value="RIESKE"/>
    <property type="match status" value="1"/>
</dbReference>
<dbReference type="PROSITE" id="PS00570">
    <property type="entry name" value="RING_HYDROXYL_ALPHA"/>
    <property type="match status" value="1"/>
</dbReference>
<comment type="cofactor">
    <cofactor evidence="3">
        <name>[2Fe-2S] cluster</name>
        <dbReference type="ChEBI" id="CHEBI:190135"/>
    </cofactor>
    <text evidence="3">Binds 1 [2Fe-2S] cluster.</text>
</comment>
<comment type="cofactor">
    <cofactor evidence="3">
        <name>Fe cation</name>
        <dbReference type="ChEBI" id="CHEBI:24875"/>
    </cofactor>
    <text evidence="3">Binds 1 Fe cation.</text>
</comment>
<comment type="pathway">
    <text>Xenobiotic degradation; toluene degradation.</text>
</comment>
<comment type="subunit">
    <text>This dioxygenase system consists of three proteins: the two subunits of the hydroxylase component (XylX and XylY), and an electron transfer component (XylZ).</text>
</comment>
<comment type="similarity">
    <text evidence="3">Belongs to the bacterial ring-hydroxylating dioxygenase alpha subunit family.</text>
</comment>
<geneLocation type="plasmid">
    <name>TOL pWW0</name>
</geneLocation>
<feature type="chain" id="PRO_0000085060" description="Toluate 1,2-dioxygenase subunit alpha">
    <location>
        <begin position="1"/>
        <end position="454"/>
    </location>
</feature>
<feature type="domain" description="Rieske" evidence="2">
    <location>
        <begin position="51"/>
        <end position="148"/>
    </location>
</feature>
<feature type="binding site" evidence="2">
    <location>
        <position position="92"/>
    </location>
    <ligand>
        <name>[2Fe-2S] cluster</name>
        <dbReference type="ChEBI" id="CHEBI:190135"/>
    </ligand>
</feature>
<feature type="binding site" evidence="2">
    <location>
        <position position="94"/>
    </location>
    <ligand>
        <name>[2Fe-2S] cluster</name>
        <dbReference type="ChEBI" id="CHEBI:190135"/>
    </ligand>
</feature>
<feature type="binding site" evidence="2">
    <location>
        <position position="112"/>
    </location>
    <ligand>
        <name>[2Fe-2S] cluster</name>
        <dbReference type="ChEBI" id="CHEBI:190135"/>
    </ligand>
</feature>
<feature type="binding site" evidence="2">
    <location>
        <position position="115"/>
    </location>
    <ligand>
        <name>[2Fe-2S] cluster</name>
        <dbReference type="ChEBI" id="CHEBI:190135"/>
    </ligand>
</feature>
<feature type="binding site" evidence="1">
    <location>
        <position position="221"/>
    </location>
    <ligand>
        <name>Fe cation</name>
        <dbReference type="ChEBI" id="CHEBI:24875"/>
    </ligand>
</feature>
<feature type="binding site" evidence="1">
    <location>
        <position position="226"/>
    </location>
    <ligand>
        <name>Fe cation</name>
        <dbReference type="ChEBI" id="CHEBI:24875"/>
    </ligand>
</feature>
<evidence type="ECO:0000250" key="1"/>
<evidence type="ECO:0000255" key="2">
    <source>
        <dbReference type="PROSITE-ProRule" id="PRU00628"/>
    </source>
</evidence>
<evidence type="ECO:0000305" key="3"/>
<proteinExistence type="inferred from homology"/>
<reference key="1">
    <citation type="journal article" date="1992" name="Eur. J. Biochem.">
        <title>Cis-diol dehydrogenases encoded by the TOL pWW0 plasmid xylL gene and the Acinetobacter calcoaceticus chromosomal benD gene are members of the short-chain alcohol dehydrogenase superfamily.</title>
        <authorList>
            <person name="Neidle E.L."/>
            <person name="Hartnett C."/>
            <person name="Ornston L.N."/>
            <person name="Bairoch A."/>
            <person name="Rekik M."/>
            <person name="Harayama S."/>
        </authorList>
    </citation>
    <scope>NUCLEOTIDE SEQUENCE [GENOMIC DNA]</scope>
</reference>
<reference key="2">
    <citation type="journal article" date="1991" name="J. Bacteriol.">
        <title>Potential DNA slippage structures acquired during evolutionary divergence of Acinetobacter calcoaceticus chromosomal benABC and Pseudomonas putida TOL pWW0 plasmid xylXYZ, genes encoding benzoate dioxygenases.</title>
        <authorList>
            <person name="Harayama S."/>
            <person name="Rekik M."/>
            <person name="Bairoch A."/>
            <person name="Neidle E.L."/>
            <person name="Ornston L.N."/>
        </authorList>
    </citation>
    <scope>NUCLEOTIDE SEQUENCE [GENOMIC DNA] OF 3-454</scope>
</reference>
<name>XYLX_PSEPU</name>
<gene>
    <name type="primary">xylX</name>
</gene>
<sequence length="454" mass="51898">MTMTMHLGLDYIDSLVEEDENEGIYRCKREMFTDPRLFDLEMKHIFEGNWIYLAHESQIPEKNDYYTTQMGRQPIFITRNKDGELNAFVNACSHRGATLCRFRSGNKATHTCSFHGWTFSNSGKLLKVKDPKGAGYPDSFDCDGSHDLKKVARFASYRGFLFGSLREDVAPLEEFLGESRKVIDMVVDQSPEGLEVLRGSSTYVYEGNWKVQVENGADGYHVSTVHWNYAATQQQRKLRDAGDDIRAMTASSWGGDGGGFYSFENGHQMVWARWGDPKNRPLFAERDRLASEFGEARADWMIGVSRNLCLYPNLYLMDQFGSQLRITRPLSVDRTEITIYCIAPKGETPRRARRVRQYEDFFNVSGMATPDDLEEFRACQEGFAGGGMNDMSRGAKHWIEGPDEGAKEIDLHPKLSGVRSEDEGLFVMQHKYWQQQMIKAVKREQDRLIHAEGV</sequence>
<protein>
    <recommendedName>
        <fullName>Toluate 1,2-dioxygenase subunit alpha</fullName>
        <ecNumber>1.14.12.-</ecNumber>
    </recommendedName>
</protein>